<reference key="1">
    <citation type="journal article" date="2006" name="Proc. Natl. Acad. Sci. U.S.A.">
        <title>Comparative genomics of the lactic acid bacteria.</title>
        <authorList>
            <person name="Makarova K.S."/>
            <person name="Slesarev A."/>
            <person name="Wolf Y.I."/>
            <person name="Sorokin A."/>
            <person name="Mirkin B."/>
            <person name="Koonin E.V."/>
            <person name="Pavlov A."/>
            <person name="Pavlova N."/>
            <person name="Karamychev V."/>
            <person name="Polouchine N."/>
            <person name="Shakhova V."/>
            <person name="Grigoriev I."/>
            <person name="Lou Y."/>
            <person name="Rohksar D."/>
            <person name="Lucas S."/>
            <person name="Huang K."/>
            <person name="Goodstein D.M."/>
            <person name="Hawkins T."/>
            <person name="Plengvidhya V."/>
            <person name="Welker D."/>
            <person name="Hughes J."/>
            <person name="Goh Y."/>
            <person name="Benson A."/>
            <person name="Baldwin K."/>
            <person name="Lee J.-H."/>
            <person name="Diaz-Muniz I."/>
            <person name="Dosti B."/>
            <person name="Smeianov V."/>
            <person name="Wechter W."/>
            <person name="Barabote R."/>
            <person name="Lorca G."/>
            <person name="Altermann E."/>
            <person name="Barrangou R."/>
            <person name="Ganesan B."/>
            <person name="Xie Y."/>
            <person name="Rawsthorne H."/>
            <person name="Tamir D."/>
            <person name="Parker C."/>
            <person name="Breidt F."/>
            <person name="Broadbent J.R."/>
            <person name="Hutkins R."/>
            <person name="O'Sullivan D."/>
            <person name="Steele J."/>
            <person name="Unlu G."/>
            <person name="Saier M.H. Jr."/>
            <person name="Klaenhammer T."/>
            <person name="Richardson P."/>
            <person name="Kozyavkin S."/>
            <person name="Weimer B.C."/>
            <person name="Mills D.A."/>
        </authorList>
    </citation>
    <scope>NUCLEOTIDE SEQUENCE [LARGE SCALE GENOMIC DNA]</scope>
    <source>
        <strain>SK11</strain>
    </source>
</reference>
<dbReference type="EC" id="4.2.3.5" evidence="1"/>
<dbReference type="EMBL" id="CP000425">
    <property type="protein sequence ID" value="ABJ73400.1"/>
    <property type="molecule type" value="Genomic_DNA"/>
</dbReference>
<dbReference type="RefSeq" id="WP_011676748.1">
    <property type="nucleotide sequence ID" value="NC_008527.1"/>
</dbReference>
<dbReference type="SMR" id="Q02XC2"/>
<dbReference type="KEGG" id="llc:LACR_1916"/>
<dbReference type="HOGENOM" id="CLU_034547_2_0_9"/>
<dbReference type="UniPathway" id="UPA00053">
    <property type="reaction ID" value="UER00090"/>
</dbReference>
<dbReference type="Proteomes" id="UP000000240">
    <property type="component" value="Chromosome"/>
</dbReference>
<dbReference type="GO" id="GO:0005829">
    <property type="term" value="C:cytosol"/>
    <property type="evidence" value="ECO:0007669"/>
    <property type="project" value="TreeGrafter"/>
</dbReference>
<dbReference type="GO" id="GO:0004107">
    <property type="term" value="F:chorismate synthase activity"/>
    <property type="evidence" value="ECO:0007669"/>
    <property type="project" value="UniProtKB-UniRule"/>
</dbReference>
<dbReference type="GO" id="GO:0010181">
    <property type="term" value="F:FMN binding"/>
    <property type="evidence" value="ECO:0007669"/>
    <property type="project" value="TreeGrafter"/>
</dbReference>
<dbReference type="GO" id="GO:0008652">
    <property type="term" value="P:amino acid biosynthetic process"/>
    <property type="evidence" value="ECO:0007669"/>
    <property type="project" value="UniProtKB-KW"/>
</dbReference>
<dbReference type="GO" id="GO:0009073">
    <property type="term" value="P:aromatic amino acid family biosynthetic process"/>
    <property type="evidence" value="ECO:0007669"/>
    <property type="project" value="UniProtKB-KW"/>
</dbReference>
<dbReference type="GO" id="GO:0009423">
    <property type="term" value="P:chorismate biosynthetic process"/>
    <property type="evidence" value="ECO:0007669"/>
    <property type="project" value="UniProtKB-UniRule"/>
</dbReference>
<dbReference type="CDD" id="cd07304">
    <property type="entry name" value="Chorismate_synthase"/>
    <property type="match status" value="1"/>
</dbReference>
<dbReference type="FunFam" id="3.60.150.10:FF:000002">
    <property type="entry name" value="Chorismate synthase"/>
    <property type="match status" value="1"/>
</dbReference>
<dbReference type="Gene3D" id="3.60.150.10">
    <property type="entry name" value="Chorismate synthase AroC"/>
    <property type="match status" value="1"/>
</dbReference>
<dbReference type="HAMAP" id="MF_00300">
    <property type="entry name" value="Chorismate_synth"/>
    <property type="match status" value="1"/>
</dbReference>
<dbReference type="InterPro" id="IPR000453">
    <property type="entry name" value="Chorismate_synth"/>
</dbReference>
<dbReference type="InterPro" id="IPR035904">
    <property type="entry name" value="Chorismate_synth_AroC_sf"/>
</dbReference>
<dbReference type="InterPro" id="IPR020541">
    <property type="entry name" value="Chorismate_synthase_CS"/>
</dbReference>
<dbReference type="NCBIfam" id="TIGR00033">
    <property type="entry name" value="aroC"/>
    <property type="match status" value="1"/>
</dbReference>
<dbReference type="NCBIfam" id="NF003793">
    <property type="entry name" value="PRK05382.1"/>
    <property type="match status" value="1"/>
</dbReference>
<dbReference type="PANTHER" id="PTHR21085">
    <property type="entry name" value="CHORISMATE SYNTHASE"/>
    <property type="match status" value="1"/>
</dbReference>
<dbReference type="PANTHER" id="PTHR21085:SF0">
    <property type="entry name" value="CHORISMATE SYNTHASE"/>
    <property type="match status" value="1"/>
</dbReference>
<dbReference type="Pfam" id="PF01264">
    <property type="entry name" value="Chorismate_synt"/>
    <property type="match status" value="1"/>
</dbReference>
<dbReference type="PIRSF" id="PIRSF001456">
    <property type="entry name" value="Chorismate_synth"/>
    <property type="match status" value="1"/>
</dbReference>
<dbReference type="SUPFAM" id="SSF103263">
    <property type="entry name" value="Chorismate synthase, AroC"/>
    <property type="match status" value="1"/>
</dbReference>
<dbReference type="PROSITE" id="PS00787">
    <property type="entry name" value="CHORISMATE_SYNTHASE_1"/>
    <property type="match status" value="1"/>
</dbReference>
<dbReference type="PROSITE" id="PS00788">
    <property type="entry name" value="CHORISMATE_SYNTHASE_2"/>
    <property type="match status" value="1"/>
</dbReference>
<dbReference type="PROSITE" id="PS00789">
    <property type="entry name" value="CHORISMATE_SYNTHASE_3"/>
    <property type="match status" value="1"/>
</dbReference>
<comment type="function">
    <text evidence="1">Catalyzes the anti-1,4-elimination of the C-3 phosphate and the C-6 proR hydrogen from 5-enolpyruvylshikimate-3-phosphate (EPSP) to yield chorismate, which is the branch point compound that serves as the starting substrate for the three terminal pathways of aromatic amino acid biosynthesis. This reaction introduces a second double bond into the aromatic ring system.</text>
</comment>
<comment type="catalytic activity">
    <reaction evidence="1">
        <text>5-O-(1-carboxyvinyl)-3-phosphoshikimate = chorismate + phosphate</text>
        <dbReference type="Rhea" id="RHEA:21020"/>
        <dbReference type="ChEBI" id="CHEBI:29748"/>
        <dbReference type="ChEBI" id="CHEBI:43474"/>
        <dbReference type="ChEBI" id="CHEBI:57701"/>
        <dbReference type="EC" id="4.2.3.5"/>
    </reaction>
</comment>
<comment type="cofactor">
    <cofactor evidence="1">
        <name>FMNH2</name>
        <dbReference type="ChEBI" id="CHEBI:57618"/>
    </cofactor>
    <text evidence="1">Reduced FMN (FMNH(2)).</text>
</comment>
<comment type="pathway">
    <text evidence="1">Metabolic intermediate biosynthesis; chorismate biosynthesis; chorismate from D-erythrose 4-phosphate and phosphoenolpyruvate: step 7/7.</text>
</comment>
<comment type="subunit">
    <text evidence="1">Homotetramer.</text>
</comment>
<comment type="similarity">
    <text evidence="1">Belongs to the chorismate synthase family.</text>
</comment>
<sequence>MRYFTAGESHGPRLTAIIEGVPAGLSLSAEDINIELKRRQGGYGRGGRMKIESDQVEITSGVRHGKTIGSPITLNVTNRDFKNWEQIMAAQDVEDKIKKQRRLTKPRPGHADLVGGMKYEFEDLRNVLERSSARETTMRVAVGAVAKKLLHELEIEVANHVVNFGRREISSPEHLSVQEIRETAGRSDLSIFDESQAEDLRTYIDQIKKAGDTIGGIIETRVEGVPAGLGSYVQYDRKLDAKIAGAVVSINAFKGVEFGLGFEAGKRPGSQVMDEIIWSENKGYTRSSNQLGGFEGGMTNGEQLIVRGVMKPIPTLYKPLMSIDTESHEPYKASVERSDPTALPAAGVVMENVVATVVAQEICDKFNSDTINELKKALVDYKKRLSEY</sequence>
<name>AROC_LACLS</name>
<organism>
    <name type="scientific">Lactococcus lactis subsp. cremoris (strain SK11)</name>
    <dbReference type="NCBI Taxonomy" id="272622"/>
    <lineage>
        <taxon>Bacteria</taxon>
        <taxon>Bacillati</taxon>
        <taxon>Bacillota</taxon>
        <taxon>Bacilli</taxon>
        <taxon>Lactobacillales</taxon>
        <taxon>Streptococcaceae</taxon>
        <taxon>Lactococcus</taxon>
        <taxon>Lactococcus cremoris subsp. cremoris</taxon>
    </lineage>
</organism>
<proteinExistence type="inferred from homology"/>
<protein>
    <recommendedName>
        <fullName evidence="1">Chorismate synthase</fullName>
        <shortName evidence="1">CS</shortName>
        <ecNumber evidence="1">4.2.3.5</ecNumber>
    </recommendedName>
    <alternativeName>
        <fullName evidence="1">5-enolpyruvylshikimate-3-phosphate phospholyase</fullName>
    </alternativeName>
</protein>
<evidence type="ECO:0000255" key="1">
    <source>
        <dbReference type="HAMAP-Rule" id="MF_00300"/>
    </source>
</evidence>
<keyword id="KW-0028">Amino-acid biosynthesis</keyword>
<keyword id="KW-0057">Aromatic amino acid biosynthesis</keyword>
<keyword id="KW-0274">FAD</keyword>
<keyword id="KW-0285">Flavoprotein</keyword>
<keyword id="KW-0288">FMN</keyword>
<keyword id="KW-0456">Lyase</keyword>
<keyword id="KW-0521">NADP</keyword>
<gene>
    <name evidence="1" type="primary">aroC</name>
    <name type="ordered locus">LACR_1916</name>
</gene>
<accession>Q02XC2</accession>
<feature type="chain" id="PRO_1000022504" description="Chorismate synthase">
    <location>
        <begin position="1"/>
        <end position="388"/>
    </location>
</feature>
<feature type="binding site" evidence="1">
    <location>
        <position position="39"/>
    </location>
    <ligand>
        <name>NADP(+)</name>
        <dbReference type="ChEBI" id="CHEBI:58349"/>
    </ligand>
</feature>
<feature type="binding site" evidence="1">
    <location>
        <position position="45"/>
    </location>
    <ligand>
        <name>NADP(+)</name>
        <dbReference type="ChEBI" id="CHEBI:58349"/>
    </ligand>
</feature>
<feature type="binding site" evidence="1">
    <location>
        <begin position="130"/>
        <end position="132"/>
    </location>
    <ligand>
        <name>FMN</name>
        <dbReference type="ChEBI" id="CHEBI:58210"/>
    </ligand>
</feature>
<feature type="binding site" evidence="1">
    <location>
        <begin position="251"/>
        <end position="252"/>
    </location>
    <ligand>
        <name>FMN</name>
        <dbReference type="ChEBI" id="CHEBI:58210"/>
    </ligand>
</feature>
<feature type="binding site" evidence="1">
    <location>
        <position position="296"/>
    </location>
    <ligand>
        <name>FMN</name>
        <dbReference type="ChEBI" id="CHEBI:58210"/>
    </ligand>
</feature>
<feature type="binding site" evidence="1">
    <location>
        <begin position="311"/>
        <end position="315"/>
    </location>
    <ligand>
        <name>FMN</name>
        <dbReference type="ChEBI" id="CHEBI:58210"/>
    </ligand>
</feature>
<feature type="binding site" evidence="1">
    <location>
        <position position="337"/>
    </location>
    <ligand>
        <name>FMN</name>
        <dbReference type="ChEBI" id="CHEBI:58210"/>
    </ligand>
</feature>